<dbReference type="EC" id="3.6.4.13" evidence="1"/>
<dbReference type="EMBL" id="CP001063">
    <property type="protein sequence ID" value="ACD08571.1"/>
    <property type="molecule type" value="Genomic_DNA"/>
</dbReference>
<dbReference type="RefSeq" id="WP_000047518.1">
    <property type="nucleotide sequence ID" value="NC_010658.1"/>
</dbReference>
<dbReference type="SMR" id="B2TU12"/>
<dbReference type="STRING" id="344609.SbBS512_E4141"/>
<dbReference type="KEGG" id="sbc:SbBS512_E4141"/>
<dbReference type="HOGENOM" id="CLU_003041_1_3_6"/>
<dbReference type="Proteomes" id="UP000001030">
    <property type="component" value="Chromosome"/>
</dbReference>
<dbReference type="GO" id="GO:0005829">
    <property type="term" value="C:cytosol"/>
    <property type="evidence" value="ECO:0007669"/>
    <property type="project" value="TreeGrafter"/>
</dbReference>
<dbReference type="GO" id="GO:0005524">
    <property type="term" value="F:ATP binding"/>
    <property type="evidence" value="ECO:0007669"/>
    <property type="project" value="UniProtKB-UniRule"/>
</dbReference>
<dbReference type="GO" id="GO:0016887">
    <property type="term" value="F:ATP hydrolysis activity"/>
    <property type="evidence" value="ECO:0007669"/>
    <property type="project" value="RHEA"/>
</dbReference>
<dbReference type="GO" id="GO:0003723">
    <property type="term" value="F:RNA binding"/>
    <property type="evidence" value="ECO:0007669"/>
    <property type="project" value="UniProtKB-UniRule"/>
</dbReference>
<dbReference type="GO" id="GO:0003724">
    <property type="term" value="F:RNA helicase activity"/>
    <property type="evidence" value="ECO:0007669"/>
    <property type="project" value="UniProtKB-UniRule"/>
</dbReference>
<dbReference type="GO" id="GO:0006401">
    <property type="term" value="P:RNA catabolic process"/>
    <property type="evidence" value="ECO:0007669"/>
    <property type="project" value="UniProtKB-UniRule"/>
</dbReference>
<dbReference type="CDD" id="cd00268">
    <property type="entry name" value="DEADc"/>
    <property type="match status" value="1"/>
</dbReference>
<dbReference type="CDD" id="cd18787">
    <property type="entry name" value="SF2_C_DEAD"/>
    <property type="match status" value="1"/>
</dbReference>
<dbReference type="FunFam" id="3.40.50.300:FF:000008">
    <property type="entry name" value="ATP-dependent RNA helicase RhlB"/>
    <property type="match status" value="1"/>
</dbReference>
<dbReference type="FunFam" id="3.40.50.300:FF:000312">
    <property type="entry name" value="ATP-dependent RNA helicase RhlB"/>
    <property type="match status" value="1"/>
</dbReference>
<dbReference type="Gene3D" id="3.40.50.300">
    <property type="entry name" value="P-loop containing nucleotide triphosphate hydrolases"/>
    <property type="match status" value="2"/>
</dbReference>
<dbReference type="HAMAP" id="MF_00661">
    <property type="entry name" value="DEAD_helicase_RhlB"/>
    <property type="match status" value="1"/>
</dbReference>
<dbReference type="InterPro" id="IPR011545">
    <property type="entry name" value="DEAD/DEAH_box_helicase_dom"/>
</dbReference>
<dbReference type="InterPro" id="IPR050079">
    <property type="entry name" value="DEAD_box_RNA_helicase"/>
</dbReference>
<dbReference type="InterPro" id="IPR014001">
    <property type="entry name" value="Helicase_ATP-bd"/>
</dbReference>
<dbReference type="InterPro" id="IPR001650">
    <property type="entry name" value="Helicase_C-like"/>
</dbReference>
<dbReference type="InterPro" id="IPR027417">
    <property type="entry name" value="P-loop_NTPase"/>
</dbReference>
<dbReference type="InterPro" id="IPR000629">
    <property type="entry name" value="RNA-helicase_DEAD-box_CS"/>
</dbReference>
<dbReference type="InterPro" id="IPR023554">
    <property type="entry name" value="RNA_helicase_ATP-dep_RhlB"/>
</dbReference>
<dbReference type="InterPro" id="IPR014014">
    <property type="entry name" value="RNA_helicase_DEAD_Q_motif"/>
</dbReference>
<dbReference type="NCBIfam" id="NF003419">
    <property type="entry name" value="PRK04837.1"/>
    <property type="match status" value="1"/>
</dbReference>
<dbReference type="PANTHER" id="PTHR47959:SF10">
    <property type="entry name" value="ATP-DEPENDENT RNA HELICASE RHLB"/>
    <property type="match status" value="1"/>
</dbReference>
<dbReference type="PANTHER" id="PTHR47959">
    <property type="entry name" value="ATP-DEPENDENT RNA HELICASE RHLE-RELATED"/>
    <property type="match status" value="1"/>
</dbReference>
<dbReference type="Pfam" id="PF00270">
    <property type="entry name" value="DEAD"/>
    <property type="match status" value="1"/>
</dbReference>
<dbReference type="Pfam" id="PF00271">
    <property type="entry name" value="Helicase_C"/>
    <property type="match status" value="1"/>
</dbReference>
<dbReference type="SMART" id="SM00487">
    <property type="entry name" value="DEXDc"/>
    <property type="match status" value="1"/>
</dbReference>
<dbReference type="SMART" id="SM00490">
    <property type="entry name" value="HELICc"/>
    <property type="match status" value="1"/>
</dbReference>
<dbReference type="SUPFAM" id="SSF52540">
    <property type="entry name" value="P-loop containing nucleoside triphosphate hydrolases"/>
    <property type="match status" value="1"/>
</dbReference>
<dbReference type="PROSITE" id="PS00039">
    <property type="entry name" value="DEAD_ATP_HELICASE"/>
    <property type="match status" value="1"/>
</dbReference>
<dbReference type="PROSITE" id="PS51192">
    <property type="entry name" value="HELICASE_ATP_BIND_1"/>
    <property type="match status" value="1"/>
</dbReference>
<dbReference type="PROSITE" id="PS51194">
    <property type="entry name" value="HELICASE_CTER"/>
    <property type="match status" value="1"/>
</dbReference>
<dbReference type="PROSITE" id="PS51195">
    <property type="entry name" value="Q_MOTIF"/>
    <property type="match status" value="1"/>
</dbReference>
<sequence length="421" mass="47154">MSKTHLTEQKFSDFALHPKVVEVLEKKGFHNCTPIQALALPLTLAGRDVAGQAQTGTGKTMAFLTSTFHYLLSHPAIADRKVNQPRALIMAPTRELAVQIHADAEPLAEATGLKLGLAYGGDGYDKQLKVLESGVDILIGTTGRLIDYAKQNHINLGAIQVVVLDEADRMYDLGFIKDIRWLFRRMPPANQRLNMLFSATLSYRVRELAFEQMNNAEYIEVEPEQKTGHRIKEELFYPSNEEKMRLLQTLIEEEWPDRAIIFANTKHRCEEIWGHLAADGHRVGLLTGDVAQKKRLRILDEFTRGDLDILVATDVAARGLHIPAVTHVFNYDLPDDCEDYVHRIGRTGRAGASGHSISLACEEYALNLPAIETYIGHSIPVSKYNPDALMTDLPKPLRLTRPRTGNGPRRTGAPRNRRRSG</sequence>
<evidence type="ECO:0000255" key="1">
    <source>
        <dbReference type="HAMAP-Rule" id="MF_00661"/>
    </source>
</evidence>
<evidence type="ECO:0000256" key="2">
    <source>
        <dbReference type="SAM" id="MobiDB-lite"/>
    </source>
</evidence>
<organism>
    <name type="scientific">Shigella boydii serotype 18 (strain CDC 3083-94 / BS512)</name>
    <dbReference type="NCBI Taxonomy" id="344609"/>
    <lineage>
        <taxon>Bacteria</taxon>
        <taxon>Pseudomonadati</taxon>
        <taxon>Pseudomonadota</taxon>
        <taxon>Gammaproteobacteria</taxon>
        <taxon>Enterobacterales</taxon>
        <taxon>Enterobacteriaceae</taxon>
        <taxon>Shigella</taxon>
    </lineage>
</organism>
<keyword id="KW-0067">ATP-binding</keyword>
<keyword id="KW-0963">Cytoplasm</keyword>
<keyword id="KW-0347">Helicase</keyword>
<keyword id="KW-0378">Hydrolase</keyword>
<keyword id="KW-0547">Nucleotide-binding</keyword>
<keyword id="KW-1185">Reference proteome</keyword>
<keyword id="KW-0694">RNA-binding</keyword>
<accession>B2TU12</accession>
<name>RHLB_SHIB3</name>
<proteinExistence type="inferred from homology"/>
<reference key="1">
    <citation type="submission" date="2008-05" db="EMBL/GenBank/DDBJ databases">
        <title>Complete sequence of Shigella boydii serotype 18 strain BS512.</title>
        <authorList>
            <person name="Rasko D.A."/>
            <person name="Rosovitz M."/>
            <person name="Maurelli A.T."/>
            <person name="Myers G."/>
            <person name="Seshadri R."/>
            <person name="Cer R."/>
            <person name="Jiang L."/>
            <person name="Ravel J."/>
            <person name="Sebastian Y."/>
        </authorList>
    </citation>
    <scope>NUCLEOTIDE SEQUENCE [LARGE SCALE GENOMIC DNA]</scope>
    <source>
        <strain>CDC 3083-94 / BS512</strain>
    </source>
</reference>
<feature type="chain" id="PRO_1000131310" description="ATP-dependent RNA helicase RhlB">
    <location>
        <begin position="1"/>
        <end position="421"/>
    </location>
</feature>
<feature type="domain" description="Helicase ATP-binding" evidence="1">
    <location>
        <begin position="40"/>
        <end position="219"/>
    </location>
</feature>
<feature type="domain" description="Helicase C-terminal" evidence="1">
    <location>
        <begin position="245"/>
        <end position="390"/>
    </location>
</feature>
<feature type="region of interest" description="Disordered" evidence="2">
    <location>
        <begin position="392"/>
        <end position="421"/>
    </location>
</feature>
<feature type="short sequence motif" description="Q motif">
    <location>
        <begin position="9"/>
        <end position="37"/>
    </location>
</feature>
<feature type="short sequence motif" description="DEAD box">
    <location>
        <begin position="165"/>
        <end position="168"/>
    </location>
</feature>
<feature type="compositionally biased region" description="Low complexity" evidence="2">
    <location>
        <begin position="402"/>
        <end position="414"/>
    </location>
</feature>
<feature type="binding site" evidence="1">
    <location>
        <begin position="53"/>
        <end position="60"/>
    </location>
    <ligand>
        <name>ATP</name>
        <dbReference type="ChEBI" id="CHEBI:30616"/>
    </ligand>
</feature>
<protein>
    <recommendedName>
        <fullName evidence="1">ATP-dependent RNA helicase RhlB</fullName>
        <ecNumber evidence="1">3.6.4.13</ecNumber>
    </recommendedName>
</protein>
<gene>
    <name evidence="1" type="primary">rhlB</name>
    <name type="ordered locus">SbBS512_E4141</name>
</gene>
<comment type="function">
    <text evidence="1">DEAD-box RNA helicase involved in RNA degradation. Has RNA-dependent ATPase activity and unwinds double-stranded RNA.</text>
</comment>
<comment type="catalytic activity">
    <reaction evidence="1">
        <text>ATP + H2O = ADP + phosphate + H(+)</text>
        <dbReference type="Rhea" id="RHEA:13065"/>
        <dbReference type="ChEBI" id="CHEBI:15377"/>
        <dbReference type="ChEBI" id="CHEBI:15378"/>
        <dbReference type="ChEBI" id="CHEBI:30616"/>
        <dbReference type="ChEBI" id="CHEBI:43474"/>
        <dbReference type="ChEBI" id="CHEBI:456216"/>
        <dbReference type="EC" id="3.6.4.13"/>
    </reaction>
</comment>
<comment type="subunit">
    <text evidence="1">Component of the RNA degradosome, which is a multiprotein complex involved in RNA processing and mRNA degradation.</text>
</comment>
<comment type="subcellular location">
    <subcellularLocation>
        <location evidence="1">Cytoplasm</location>
    </subcellularLocation>
</comment>
<comment type="similarity">
    <text evidence="1">Belongs to the DEAD box helicase family. RhlB subfamily.</text>
</comment>